<name>KTHY_BACHK</name>
<proteinExistence type="inferred from homology"/>
<comment type="function">
    <text evidence="1">Phosphorylation of dTMP to form dTDP in both de novo and salvage pathways of dTTP synthesis.</text>
</comment>
<comment type="catalytic activity">
    <reaction evidence="1">
        <text>dTMP + ATP = dTDP + ADP</text>
        <dbReference type="Rhea" id="RHEA:13517"/>
        <dbReference type="ChEBI" id="CHEBI:30616"/>
        <dbReference type="ChEBI" id="CHEBI:58369"/>
        <dbReference type="ChEBI" id="CHEBI:63528"/>
        <dbReference type="ChEBI" id="CHEBI:456216"/>
        <dbReference type="EC" id="2.7.4.9"/>
    </reaction>
</comment>
<comment type="similarity">
    <text evidence="1">Belongs to the thymidylate kinase family.</text>
</comment>
<gene>
    <name evidence="1" type="primary">tmk</name>
    <name type="ordered locus">BT9727_0026</name>
</gene>
<keyword id="KW-0067">ATP-binding</keyword>
<keyword id="KW-0418">Kinase</keyword>
<keyword id="KW-0545">Nucleotide biosynthesis</keyword>
<keyword id="KW-0547">Nucleotide-binding</keyword>
<keyword id="KW-0808">Transferase</keyword>
<sequence length="208" mass="23804">MKGLFVTIEGPEGSGKTTLIQSLLPYFEQKEQKVMATREPGGIAISEDIRTILHKQEYTMMEARTEALLYAAARRQHLVEKVMPALNEDYLVLCDRFIDSSLAYQGYARGLGMDKVFEINRFATEDCMPSLTIYLDIEPEVGLARIAKDAGREVNRLDMEDISFHKRVREGYLQVVERFSDRIVLVNADQPMEKLIEEVIQVIEDKLL</sequence>
<dbReference type="EC" id="2.7.4.9" evidence="1"/>
<dbReference type="EMBL" id="AE017355">
    <property type="protein sequence ID" value="AAT62219.1"/>
    <property type="molecule type" value="Genomic_DNA"/>
</dbReference>
<dbReference type="RefSeq" id="WP_000677237.1">
    <property type="nucleotide sequence ID" value="NC_005957.1"/>
</dbReference>
<dbReference type="RefSeq" id="YP_034384.1">
    <property type="nucleotide sequence ID" value="NC_005957.1"/>
</dbReference>
<dbReference type="SMR" id="Q6HPY6"/>
<dbReference type="GeneID" id="45020070"/>
<dbReference type="KEGG" id="btk:BT9727_0026"/>
<dbReference type="PATRIC" id="fig|281309.8.peg.27"/>
<dbReference type="HOGENOM" id="CLU_049131_0_2_9"/>
<dbReference type="Proteomes" id="UP000001301">
    <property type="component" value="Chromosome"/>
</dbReference>
<dbReference type="GO" id="GO:0005829">
    <property type="term" value="C:cytosol"/>
    <property type="evidence" value="ECO:0007669"/>
    <property type="project" value="TreeGrafter"/>
</dbReference>
<dbReference type="GO" id="GO:0005524">
    <property type="term" value="F:ATP binding"/>
    <property type="evidence" value="ECO:0007669"/>
    <property type="project" value="UniProtKB-UniRule"/>
</dbReference>
<dbReference type="GO" id="GO:0004798">
    <property type="term" value="F:dTMP kinase activity"/>
    <property type="evidence" value="ECO:0007669"/>
    <property type="project" value="UniProtKB-UniRule"/>
</dbReference>
<dbReference type="GO" id="GO:0006233">
    <property type="term" value="P:dTDP biosynthetic process"/>
    <property type="evidence" value="ECO:0007669"/>
    <property type="project" value="InterPro"/>
</dbReference>
<dbReference type="GO" id="GO:0006235">
    <property type="term" value="P:dTTP biosynthetic process"/>
    <property type="evidence" value="ECO:0007669"/>
    <property type="project" value="UniProtKB-UniRule"/>
</dbReference>
<dbReference type="GO" id="GO:0006227">
    <property type="term" value="P:dUDP biosynthetic process"/>
    <property type="evidence" value="ECO:0007669"/>
    <property type="project" value="TreeGrafter"/>
</dbReference>
<dbReference type="CDD" id="cd01672">
    <property type="entry name" value="TMPK"/>
    <property type="match status" value="1"/>
</dbReference>
<dbReference type="FunFam" id="3.40.50.300:FF:000225">
    <property type="entry name" value="Thymidylate kinase"/>
    <property type="match status" value="1"/>
</dbReference>
<dbReference type="Gene3D" id="3.40.50.300">
    <property type="entry name" value="P-loop containing nucleotide triphosphate hydrolases"/>
    <property type="match status" value="1"/>
</dbReference>
<dbReference type="HAMAP" id="MF_00165">
    <property type="entry name" value="Thymidylate_kinase"/>
    <property type="match status" value="1"/>
</dbReference>
<dbReference type="InterPro" id="IPR027417">
    <property type="entry name" value="P-loop_NTPase"/>
</dbReference>
<dbReference type="InterPro" id="IPR039430">
    <property type="entry name" value="Thymidylate_kin-like_dom"/>
</dbReference>
<dbReference type="InterPro" id="IPR018095">
    <property type="entry name" value="Thymidylate_kin_CS"/>
</dbReference>
<dbReference type="InterPro" id="IPR018094">
    <property type="entry name" value="Thymidylate_kinase"/>
</dbReference>
<dbReference type="NCBIfam" id="TIGR00041">
    <property type="entry name" value="DTMP_kinase"/>
    <property type="match status" value="1"/>
</dbReference>
<dbReference type="PANTHER" id="PTHR10344">
    <property type="entry name" value="THYMIDYLATE KINASE"/>
    <property type="match status" value="1"/>
</dbReference>
<dbReference type="PANTHER" id="PTHR10344:SF4">
    <property type="entry name" value="UMP-CMP KINASE 2, MITOCHONDRIAL"/>
    <property type="match status" value="1"/>
</dbReference>
<dbReference type="Pfam" id="PF02223">
    <property type="entry name" value="Thymidylate_kin"/>
    <property type="match status" value="1"/>
</dbReference>
<dbReference type="SUPFAM" id="SSF52540">
    <property type="entry name" value="P-loop containing nucleoside triphosphate hydrolases"/>
    <property type="match status" value="1"/>
</dbReference>
<dbReference type="PROSITE" id="PS01331">
    <property type="entry name" value="THYMIDYLATE_KINASE"/>
    <property type="match status" value="1"/>
</dbReference>
<evidence type="ECO:0000255" key="1">
    <source>
        <dbReference type="HAMAP-Rule" id="MF_00165"/>
    </source>
</evidence>
<accession>Q6HPY6</accession>
<organism>
    <name type="scientific">Bacillus thuringiensis subsp. konkukian (strain 97-27)</name>
    <dbReference type="NCBI Taxonomy" id="281309"/>
    <lineage>
        <taxon>Bacteria</taxon>
        <taxon>Bacillati</taxon>
        <taxon>Bacillota</taxon>
        <taxon>Bacilli</taxon>
        <taxon>Bacillales</taxon>
        <taxon>Bacillaceae</taxon>
        <taxon>Bacillus</taxon>
        <taxon>Bacillus cereus group</taxon>
    </lineage>
</organism>
<protein>
    <recommendedName>
        <fullName evidence="1">Thymidylate kinase</fullName>
        <ecNumber evidence="1">2.7.4.9</ecNumber>
    </recommendedName>
    <alternativeName>
        <fullName evidence="1">dTMP kinase</fullName>
    </alternativeName>
</protein>
<feature type="chain" id="PRO_0000155236" description="Thymidylate kinase">
    <location>
        <begin position="1"/>
        <end position="208"/>
    </location>
</feature>
<feature type="binding site" evidence="1">
    <location>
        <begin position="10"/>
        <end position="17"/>
    </location>
    <ligand>
        <name>ATP</name>
        <dbReference type="ChEBI" id="CHEBI:30616"/>
    </ligand>
</feature>
<reference key="1">
    <citation type="journal article" date="2006" name="J. Bacteriol.">
        <title>Pathogenomic sequence analysis of Bacillus cereus and Bacillus thuringiensis isolates closely related to Bacillus anthracis.</title>
        <authorList>
            <person name="Han C.S."/>
            <person name="Xie G."/>
            <person name="Challacombe J.F."/>
            <person name="Altherr M.R."/>
            <person name="Bhotika S.S."/>
            <person name="Bruce D."/>
            <person name="Campbell C.S."/>
            <person name="Campbell M.L."/>
            <person name="Chen J."/>
            <person name="Chertkov O."/>
            <person name="Cleland C."/>
            <person name="Dimitrijevic M."/>
            <person name="Doggett N.A."/>
            <person name="Fawcett J.J."/>
            <person name="Glavina T."/>
            <person name="Goodwin L.A."/>
            <person name="Hill K.K."/>
            <person name="Hitchcock P."/>
            <person name="Jackson P.J."/>
            <person name="Keim P."/>
            <person name="Kewalramani A.R."/>
            <person name="Longmire J."/>
            <person name="Lucas S."/>
            <person name="Malfatti S."/>
            <person name="McMurry K."/>
            <person name="Meincke L.J."/>
            <person name="Misra M."/>
            <person name="Moseman B.L."/>
            <person name="Mundt M."/>
            <person name="Munk A.C."/>
            <person name="Okinaka R.T."/>
            <person name="Parson-Quintana B."/>
            <person name="Reilly L.P."/>
            <person name="Richardson P."/>
            <person name="Robinson D.L."/>
            <person name="Rubin E."/>
            <person name="Saunders E."/>
            <person name="Tapia R."/>
            <person name="Tesmer J.G."/>
            <person name="Thayer N."/>
            <person name="Thompson L.S."/>
            <person name="Tice H."/>
            <person name="Ticknor L.O."/>
            <person name="Wills P.L."/>
            <person name="Brettin T.S."/>
            <person name="Gilna P."/>
        </authorList>
    </citation>
    <scope>NUCLEOTIDE SEQUENCE [LARGE SCALE GENOMIC DNA]</scope>
    <source>
        <strain>97-27</strain>
    </source>
</reference>